<dbReference type="EMBL" id="CP000512">
    <property type="protein sequence ID" value="ABM31226.1"/>
    <property type="molecule type" value="Genomic_DNA"/>
</dbReference>
<dbReference type="RefSeq" id="WP_011793797.1">
    <property type="nucleotide sequence ID" value="NC_008752.1"/>
</dbReference>
<dbReference type="SMR" id="A1TJT8"/>
<dbReference type="STRING" id="397945.Aave_0622"/>
<dbReference type="GeneID" id="34237577"/>
<dbReference type="GeneID" id="79790336"/>
<dbReference type="KEGG" id="aav:Aave_0622"/>
<dbReference type="eggNOG" id="COG0257">
    <property type="taxonomic scope" value="Bacteria"/>
</dbReference>
<dbReference type="HOGENOM" id="CLU_135723_6_2_4"/>
<dbReference type="OrthoDB" id="9802520at2"/>
<dbReference type="Proteomes" id="UP000002596">
    <property type="component" value="Chromosome"/>
</dbReference>
<dbReference type="GO" id="GO:0005737">
    <property type="term" value="C:cytoplasm"/>
    <property type="evidence" value="ECO:0007669"/>
    <property type="project" value="UniProtKB-ARBA"/>
</dbReference>
<dbReference type="GO" id="GO:1990904">
    <property type="term" value="C:ribonucleoprotein complex"/>
    <property type="evidence" value="ECO:0007669"/>
    <property type="project" value="UniProtKB-KW"/>
</dbReference>
<dbReference type="GO" id="GO:0005840">
    <property type="term" value="C:ribosome"/>
    <property type="evidence" value="ECO:0007669"/>
    <property type="project" value="UniProtKB-KW"/>
</dbReference>
<dbReference type="GO" id="GO:0003735">
    <property type="term" value="F:structural constituent of ribosome"/>
    <property type="evidence" value="ECO:0007669"/>
    <property type="project" value="InterPro"/>
</dbReference>
<dbReference type="GO" id="GO:0006412">
    <property type="term" value="P:translation"/>
    <property type="evidence" value="ECO:0007669"/>
    <property type="project" value="UniProtKB-UniRule"/>
</dbReference>
<dbReference type="HAMAP" id="MF_00251">
    <property type="entry name" value="Ribosomal_bL36"/>
    <property type="match status" value="1"/>
</dbReference>
<dbReference type="InterPro" id="IPR000473">
    <property type="entry name" value="Ribosomal_bL36"/>
</dbReference>
<dbReference type="InterPro" id="IPR035977">
    <property type="entry name" value="Ribosomal_bL36_sp"/>
</dbReference>
<dbReference type="NCBIfam" id="TIGR01022">
    <property type="entry name" value="rpmJ_bact"/>
    <property type="match status" value="1"/>
</dbReference>
<dbReference type="PANTHER" id="PTHR42888">
    <property type="entry name" value="50S RIBOSOMAL PROTEIN L36, CHLOROPLASTIC"/>
    <property type="match status" value="1"/>
</dbReference>
<dbReference type="PANTHER" id="PTHR42888:SF1">
    <property type="entry name" value="LARGE RIBOSOMAL SUBUNIT PROTEIN BL36C"/>
    <property type="match status" value="1"/>
</dbReference>
<dbReference type="Pfam" id="PF00444">
    <property type="entry name" value="Ribosomal_L36"/>
    <property type="match status" value="1"/>
</dbReference>
<dbReference type="SUPFAM" id="SSF57840">
    <property type="entry name" value="Ribosomal protein L36"/>
    <property type="match status" value="1"/>
</dbReference>
<dbReference type="PROSITE" id="PS00828">
    <property type="entry name" value="RIBOSOMAL_L36"/>
    <property type="match status" value="1"/>
</dbReference>
<feature type="chain" id="PRO_0000302145" description="Large ribosomal subunit protein bL36">
    <location>
        <begin position="1"/>
        <end position="37"/>
    </location>
</feature>
<proteinExistence type="inferred from homology"/>
<organism>
    <name type="scientific">Paracidovorax citrulli (strain AAC00-1)</name>
    <name type="common">Acidovorax citrulli</name>
    <dbReference type="NCBI Taxonomy" id="397945"/>
    <lineage>
        <taxon>Bacteria</taxon>
        <taxon>Pseudomonadati</taxon>
        <taxon>Pseudomonadota</taxon>
        <taxon>Betaproteobacteria</taxon>
        <taxon>Burkholderiales</taxon>
        <taxon>Comamonadaceae</taxon>
        <taxon>Paracidovorax</taxon>
    </lineage>
</organism>
<sequence length="37" mass="4355">MRVSASVKKICRNCKIIRRKGVVRVICTDMRHKQRQG</sequence>
<reference key="1">
    <citation type="submission" date="2006-12" db="EMBL/GenBank/DDBJ databases">
        <title>Complete sequence of Acidovorax avenae subsp. citrulli AAC00-1.</title>
        <authorList>
            <person name="Copeland A."/>
            <person name="Lucas S."/>
            <person name="Lapidus A."/>
            <person name="Barry K."/>
            <person name="Detter J.C."/>
            <person name="Glavina del Rio T."/>
            <person name="Dalin E."/>
            <person name="Tice H."/>
            <person name="Pitluck S."/>
            <person name="Kiss H."/>
            <person name="Brettin T."/>
            <person name="Bruce D."/>
            <person name="Han C."/>
            <person name="Tapia R."/>
            <person name="Gilna P."/>
            <person name="Schmutz J."/>
            <person name="Larimer F."/>
            <person name="Land M."/>
            <person name="Hauser L."/>
            <person name="Kyrpides N."/>
            <person name="Kim E."/>
            <person name="Stahl D."/>
            <person name="Richardson P."/>
        </authorList>
    </citation>
    <scope>NUCLEOTIDE SEQUENCE [LARGE SCALE GENOMIC DNA]</scope>
    <source>
        <strain>AAC00-1</strain>
    </source>
</reference>
<name>RL36_PARC0</name>
<accession>A1TJT8</accession>
<comment type="similarity">
    <text evidence="1">Belongs to the bacterial ribosomal protein bL36 family.</text>
</comment>
<protein>
    <recommendedName>
        <fullName evidence="1">Large ribosomal subunit protein bL36</fullName>
    </recommendedName>
    <alternativeName>
        <fullName evidence="2">50S ribosomal protein L36</fullName>
    </alternativeName>
</protein>
<keyword id="KW-0687">Ribonucleoprotein</keyword>
<keyword id="KW-0689">Ribosomal protein</keyword>
<gene>
    <name evidence="1" type="primary">rpmJ</name>
    <name type="ordered locus">Aave_0622</name>
</gene>
<evidence type="ECO:0000255" key="1">
    <source>
        <dbReference type="HAMAP-Rule" id="MF_00251"/>
    </source>
</evidence>
<evidence type="ECO:0000305" key="2"/>